<feature type="chain" id="PRO_0000164226" description="Probable multidrug resistance protein NorM">
    <location>
        <begin position="1"/>
        <end position="459"/>
    </location>
</feature>
<feature type="transmembrane region" description="Helical" evidence="2">
    <location>
        <begin position="20"/>
        <end position="40"/>
    </location>
</feature>
<feature type="transmembrane region" description="Helical" evidence="2">
    <location>
        <begin position="53"/>
        <end position="73"/>
    </location>
</feature>
<feature type="transmembrane region" description="Helical" evidence="2">
    <location>
        <begin position="100"/>
        <end position="120"/>
    </location>
</feature>
<feature type="transmembrane region" description="Helical" evidence="2">
    <location>
        <begin position="132"/>
        <end position="152"/>
    </location>
</feature>
<feature type="transmembrane region" description="Helical" evidence="2">
    <location>
        <begin position="168"/>
        <end position="188"/>
    </location>
</feature>
<feature type="transmembrane region" description="Helical" evidence="2">
    <location>
        <begin position="202"/>
        <end position="222"/>
    </location>
</feature>
<feature type="transmembrane region" description="Helical" evidence="2">
    <location>
        <begin position="254"/>
        <end position="274"/>
    </location>
</feature>
<feature type="transmembrane region" description="Helical" evidence="2">
    <location>
        <begin position="286"/>
        <end position="306"/>
    </location>
</feature>
<feature type="transmembrane region" description="Helical" evidence="2">
    <location>
        <begin position="325"/>
        <end position="345"/>
    </location>
</feature>
<feature type="transmembrane region" description="Helical" evidence="2">
    <location>
        <begin position="358"/>
        <end position="378"/>
    </location>
</feature>
<feature type="transmembrane region" description="Helical" evidence="2">
    <location>
        <begin position="395"/>
        <end position="415"/>
    </location>
</feature>
<feature type="transmembrane region" description="Helical" evidence="2">
    <location>
        <begin position="423"/>
        <end position="443"/>
    </location>
</feature>
<organism>
    <name type="scientific">Neisseria meningitidis serogroup B (strain ATCC BAA-335 / MC58)</name>
    <dbReference type="NCBI Taxonomy" id="122586"/>
    <lineage>
        <taxon>Bacteria</taxon>
        <taxon>Pseudomonadati</taxon>
        <taxon>Pseudomonadota</taxon>
        <taxon>Betaproteobacteria</taxon>
        <taxon>Neisseriales</taxon>
        <taxon>Neisseriaceae</taxon>
        <taxon>Neisseria</taxon>
    </lineage>
</organism>
<name>NORM_NEIMB</name>
<comment type="function">
    <text evidence="1">Multidrug efflux pump.</text>
</comment>
<comment type="subcellular location">
    <subcellularLocation>
        <location evidence="1">Cell inner membrane</location>
        <topology evidence="1">Multi-pass membrane protein</topology>
    </subcellularLocation>
</comment>
<comment type="similarity">
    <text evidence="3">Belongs to the multi antimicrobial extrusion (MATE) (TC 2.A.66.1) family.</text>
</comment>
<dbReference type="EMBL" id="AE002098">
    <property type="protein sequence ID" value="AAF41225.1"/>
    <property type="molecule type" value="Genomic_DNA"/>
</dbReference>
<dbReference type="PIR" id="C81156">
    <property type="entry name" value="C81156"/>
</dbReference>
<dbReference type="RefSeq" id="NP_273854.1">
    <property type="nucleotide sequence ID" value="NC_003112.2"/>
</dbReference>
<dbReference type="RefSeq" id="WP_010980851.1">
    <property type="nucleotide sequence ID" value="NC_003112.2"/>
</dbReference>
<dbReference type="SMR" id="Q9K015"/>
<dbReference type="FunCoup" id="Q9K015">
    <property type="interactions" value="162"/>
</dbReference>
<dbReference type="STRING" id="122586.NMB0812"/>
<dbReference type="PaxDb" id="122586-NMB0812"/>
<dbReference type="KEGG" id="nme:NMB0812"/>
<dbReference type="PATRIC" id="fig|122586.8.peg.1024"/>
<dbReference type="HOGENOM" id="CLU_012893_6_0_4"/>
<dbReference type="InParanoid" id="Q9K015"/>
<dbReference type="OrthoDB" id="9780160at2"/>
<dbReference type="Proteomes" id="UP000000425">
    <property type="component" value="Chromosome"/>
</dbReference>
<dbReference type="GO" id="GO:0005886">
    <property type="term" value="C:plasma membrane"/>
    <property type="evidence" value="ECO:0000318"/>
    <property type="project" value="GO_Central"/>
</dbReference>
<dbReference type="GO" id="GO:0015297">
    <property type="term" value="F:antiporter activity"/>
    <property type="evidence" value="ECO:0007669"/>
    <property type="project" value="UniProtKB-KW"/>
</dbReference>
<dbReference type="GO" id="GO:0042910">
    <property type="term" value="F:xenobiotic transmembrane transporter activity"/>
    <property type="evidence" value="ECO:0007669"/>
    <property type="project" value="InterPro"/>
</dbReference>
<dbReference type="GO" id="GO:0006811">
    <property type="term" value="P:monoatomic ion transport"/>
    <property type="evidence" value="ECO:0007669"/>
    <property type="project" value="UniProtKB-KW"/>
</dbReference>
<dbReference type="CDD" id="cd13131">
    <property type="entry name" value="MATE_NorM_like"/>
    <property type="match status" value="1"/>
</dbReference>
<dbReference type="InterPro" id="IPR002528">
    <property type="entry name" value="MATE_fam"/>
</dbReference>
<dbReference type="InterPro" id="IPR050222">
    <property type="entry name" value="MATE_MdtK"/>
</dbReference>
<dbReference type="InterPro" id="IPR048279">
    <property type="entry name" value="MdtK-like"/>
</dbReference>
<dbReference type="NCBIfam" id="TIGR00797">
    <property type="entry name" value="matE"/>
    <property type="match status" value="1"/>
</dbReference>
<dbReference type="NCBIfam" id="NF000263">
    <property type="entry name" value="MATE_multi_NorM"/>
    <property type="match status" value="1"/>
</dbReference>
<dbReference type="PANTHER" id="PTHR43298:SF2">
    <property type="entry name" value="FMN_FAD EXPORTER YEEO-RELATED"/>
    <property type="match status" value="1"/>
</dbReference>
<dbReference type="PANTHER" id="PTHR43298">
    <property type="entry name" value="MULTIDRUG RESISTANCE PROTEIN NORM-RELATED"/>
    <property type="match status" value="1"/>
</dbReference>
<dbReference type="Pfam" id="PF01554">
    <property type="entry name" value="MatE"/>
    <property type="match status" value="2"/>
</dbReference>
<dbReference type="PIRSF" id="PIRSF006603">
    <property type="entry name" value="DinF"/>
    <property type="match status" value="1"/>
</dbReference>
<protein>
    <recommendedName>
        <fullName>Probable multidrug resistance protein NorM</fullName>
    </recommendedName>
    <alternativeName>
        <fullName>Multidrug-efflux transporter</fullName>
    </alternativeName>
</protein>
<evidence type="ECO:0000250" key="1"/>
<evidence type="ECO:0000255" key="2"/>
<evidence type="ECO:0000305" key="3"/>
<keyword id="KW-0050">Antiport</keyword>
<keyword id="KW-0997">Cell inner membrane</keyword>
<keyword id="KW-1003">Cell membrane</keyword>
<keyword id="KW-0406">Ion transport</keyword>
<keyword id="KW-0472">Membrane</keyword>
<keyword id="KW-1185">Reference proteome</keyword>
<keyword id="KW-0812">Transmembrane</keyword>
<keyword id="KW-1133">Transmembrane helix</keyword>
<keyword id="KW-0813">Transport</keyword>
<reference key="1">
    <citation type="journal article" date="2000" name="Science">
        <title>Complete genome sequence of Neisseria meningitidis serogroup B strain MC58.</title>
        <authorList>
            <person name="Tettelin H."/>
            <person name="Saunders N.J."/>
            <person name="Heidelberg J.F."/>
            <person name="Jeffries A.C."/>
            <person name="Nelson K.E."/>
            <person name="Eisen J.A."/>
            <person name="Ketchum K.A."/>
            <person name="Hood D.W."/>
            <person name="Peden J.F."/>
            <person name="Dodson R.J."/>
            <person name="Nelson W.C."/>
            <person name="Gwinn M.L."/>
            <person name="DeBoy R.T."/>
            <person name="Peterson J.D."/>
            <person name="Hickey E.K."/>
            <person name="Haft D.H."/>
            <person name="Salzberg S.L."/>
            <person name="White O."/>
            <person name="Fleischmann R.D."/>
            <person name="Dougherty B.A."/>
            <person name="Mason T.M."/>
            <person name="Ciecko A."/>
            <person name="Parksey D.S."/>
            <person name="Blair E."/>
            <person name="Cittone H."/>
            <person name="Clark E.B."/>
            <person name="Cotton M.D."/>
            <person name="Utterback T.R."/>
            <person name="Khouri H.M."/>
            <person name="Qin H."/>
            <person name="Vamathevan J.J."/>
            <person name="Gill J."/>
            <person name="Scarlato V."/>
            <person name="Masignani V."/>
            <person name="Pizza M."/>
            <person name="Grandi G."/>
            <person name="Sun L."/>
            <person name="Smith H.O."/>
            <person name="Fraser C.M."/>
            <person name="Moxon E.R."/>
            <person name="Rappuoli R."/>
            <person name="Venter J.C."/>
        </authorList>
    </citation>
    <scope>NUCLEOTIDE SEQUENCE [LARGE SCALE GENOMIC DNA]</scope>
    <source>
        <strain>ATCC BAA-335 / MC58</strain>
    </source>
</reference>
<gene>
    <name type="primary">norM</name>
    <name type="ordered locus">NMB0812</name>
</gene>
<proteinExistence type="inferred from homology"/>
<sequence length="459" mass="50036">MLLDLNRFSFPVFLKEVRLLTTLALPMLLAQVAQVGIGFVDTVMAGGAGKEDLAAVALGSSAFATVYITFMGIMAALNPMIAQLYGAGKTDEVGETGRQGIWFGLFLGVFGMVLMWAAITPFRNWLTLSDYVEGTMAQYMLFTSLAMPAAMVHRALHAYTSSLNRPRLIMLVSFAAFVLNVPLNYIFVYGKFGMPALGGAGCGLATMAVFWFSALALWIYIAKENFFRPFGLTAKFGKPDWAVFKQIWKIGAPIGLSYFLEASAFSFIVFLIAPFGEDYVAAQQVGISLSGILYMIPQSVGSAGTVRIGFSLGRREFSRARYISGVSLVLGWMLAVITVLSLVLFRSPLVSMYNNDPAVLSIAATVLLFAGLFQPADFTQCIASYALRGYKVTKVPMFIHAAAFWGCGLLPGYLLAYRFNMGIYGFWTALIASLTIAAIALVWCLELCSREMVRSHKAV</sequence>
<accession>Q9K015</accession>